<gene>
    <name evidence="1" type="primary">ade</name>
    <name type="ordered locus">EFER_3962</name>
</gene>
<keyword id="KW-0378">Hydrolase</keyword>
<keyword id="KW-0464">Manganese</keyword>
<protein>
    <recommendedName>
        <fullName evidence="1">Adenine deaminase</fullName>
        <shortName evidence="1">Adenase</shortName>
        <shortName evidence="1">Adenine aminase</shortName>
        <ecNumber evidence="1">3.5.4.2</ecNumber>
    </recommendedName>
</protein>
<name>ADEC_ESCF3</name>
<sequence>MDQAINHKIHYISRQQRQEILAIARGEAVADYLIENVVILDLINGGEIAGPIAIKGRYIAGIGSEYNDAPTLQRIDAHGAIAVPGFIDAHLHIESSMMTPVTFETATLPRGLTTVICDPHEIVNVMGEAGFAWFARCAEQARQNQYLQVSSCVPALEGCDVNGASFTLEQMLAWRDHPQVTGLAEMMDYPGVISGQNALLDKLDAFRHLTLDGHCPGLGGKELNAYIAAGIENCHESYLLEEGRRKLQLGMSLMIREGSAARNLNALAPLINEFNSPQCMLCTDDRNPWEIAHEGHIDALIRRLIEQHNVPLHVAYRVASWSTARHFGLNHLGLLAPGKQADIVLLSDARKVTVQQVLVKGEPIDAQTLQAEESARLAQSAPPYGNTIARQPVSASDFALQFTPGKRYRVIDVIHNELITHSRSSVYSENGFDRDDVCFIAVLERYGQRLDPACGLLGGFGLNEGALAATVSHDSHNIVVIGRSAEEMALAVNQVIQDGGGLCVVRNGQVQSHLPLPIAGLMSTDTAQSLAEQIDALKAAARECGPLPDEPFIQMAFLSLPVIPALKLTSQGLFDGEKFAFTTLEVTE</sequence>
<dbReference type="EC" id="3.5.4.2" evidence="1"/>
<dbReference type="EMBL" id="CU928158">
    <property type="protein sequence ID" value="CAQ91396.1"/>
    <property type="molecule type" value="Genomic_DNA"/>
</dbReference>
<dbReference type="RefSeq" id="WP_000371693.1">
    <property type="nucleotide sequence ID" value="NC_011740.1"/>
</dbReference>
<dbReference type="SMR" id="B7LK09"/>
<dbReference type="GeneID" id="75059554"/>
<dbReference type="KEGG" id="efe:EFER_3962"/>
<dbReference type="HOGENOM" id="CLU_027935_0_0_6"/>
<dbReference type="OrthoDB" id="9766983at2"/>
<dbReference type="Proteomes" id="UP000000745">
    <property type="component" value="Chromosome"/>
</dbReference>
<dbReference type="GO" id="GO:0000034">
    <property type="term" value="F:adenine deaminase activity"/>
    <property type="evidence" value="ECO:0007669"/>
    <property type="project" value="UniProtKB-UniRule"/>
</dbReference>
<dbReference type="GO" id="GO:0006146">
    <property type="term" value="P:adenine catabolic process"/>
    <property type="evidence" value="ECO:0007669"/>
    <property type="project" value="InterPro"/>
</dbReference>
<dbReference type="CDD" id="cd01295">
    <property type="entry name" value="AdeC"/>
    <property type="match status" value="1"/>
</dbReference>
<dbReference type="FunFam" id="3.20.20.140:FF:000016">
    <property type="entry name" value="Adenine deaminase"/>
    <property type="match status" value="1"/>
</dbReference>
<dbReference type="Gene3D" id="3.20.20.140">
    <property type="entry name" value="Metal-dependent hydrolases"/>
    <property type="match status" value="1"/>
</dbReference>
<dbReference type="Gene3D" id="2.30.40.10">
    <property type="entry name" value="Urease, subunit C, domain 1"/>
    <property type="match status" value="1"/>
</dbReference>
<dbReference type="HAMAP" id="MF_01518">
    <property type="entry name" value="Adenine_deamin"/>
    <property type="match status" value="1"/>
</dbReference>
<dbReference type="InterPro" id="IPR006679">
    <property type="entry name" value="Adenine_deam"/>
</dbReference>
<dbReference type="InterPro" id="IPR026912">
    <property type="entry name" value="Adenine_deam_C"/>
</dbReference>
<dbReference type="InterPro" id="IPR006680">
    <property type="entry name" value="Amidohydro-rel"/>
</dbReference>
<dbReference type="InterPro" id="IPR011059">
    <property type="entry name" value="Metal-dep_hydrolase_composite"/>
</dbReference>
<dbReference type="InterPro" id="IPR032466">
    <property type="entry name" value="Metal_Hydrolase"/>
</dbReference>
<dbReference type="NCBIfam" id="TIGR01178">
    <property type="entry name" value="ade"/>
    <property type="match status" value="1"/>
</dbReference>
<dbReference type="NCBIfam" id="NF007457">
    <property type="entry name" value="PRK10027.1"/>
    <property type="match status" value="1"/>
</dbReference>
<dbReference type="PANTHER" id="PTHR11113:SF2">
    <property type="entry name" value="ADENINE DEAMINASE"/>
    <property type="match status" value="1"/>
</dbReference>
<dbReference type="PANTHER" id="PTHR11113">
    <property type="entry name" value="N-ACETYLGLUCOSAMINE-6-PHOSPHATE DEACETYLASE"/>
    <property type="match status" value="1"/>
</dbReference>
<dbReference type="Pfam" id="PF13382">
    <property type="entry name" value="Adenine_deam_C"/>
    <property type="match status" value="1"/>
</dbReference>
<dbReference type="Pfam" id="PF01979">
    <property type="entry name" value="Amidohydro_1"/>
    <property type="match status" value="1"/>
</dbReference>
<dbReference type="SUPFAM" id="SSF51338">
    <property type="entry name" value="Composite domain of metallo-dependent hydrolases"/>
    <property type="match status" value="1"/>
</dbReference>
<dbReference type="SUPFAM" id="SSF51556">
    <property type="entry name" value="Metallo-dependent hydrolases"/>
    <property type="match status" value="1"/>
</dbReference>
<evidence type="ECO:0000255" key="1">
    <source>
        <dbReference type="HAMAP-Rule" id="MF_01518"/>
    </source>
</evidence>
<proteinExistence type="inferred from homology"/>
<comment type="catalytic activity">
    <reaction evidence="1">
        <text>adenine + H2O + H(+) = hypoxanthine + NH4(+)</text>
        <dbReference type="Rhea" id="RHEA:23688"/>
        <dbReference type="ChEBI" id="CHEBI:15377"/>
        <dbReference type="ChEBI" id="CHEBI:15378"/>
        <dbReference type="ChEBI" id="CHEBI:16708"/>
        <dbReference type="ChEBI" id="CHEBI:17368"/>
        <dbReference type="ChEBI" id="CHEBI:28938"/>
        <dbReference type="EC" id="3.5.4.2"/>
    </reaction>
</comment>
<comment type="cofactor">
    <cofactor evidence="1">
        <name>Mn(2+)</name>
        <dbReference type="ChEBI" id="CHEBI:29035"/>
    </cofactor>
</comment>
<comment type="subunit">
    <text evidence="1">Homodimer.</text>
</comment>
<comment type="similarity">
    <text evidence="1">Belongs to the metallo-dependent hydrolases superfamily. Adenine deaminase family.</text>
</comment>
<accession>B7LK09</accession>
<reference key="1">
    <citation type="journal article" date="2009" name="PLoS Genet.">
        <title>Organised genome dynamics in the Escherichia coli species results in highly diverse adaptive paths.</title>
        <authorList>
            <person name="Touchon M."/>
            <person name="Hoede C."/>
            <person name="Tenaillon O."/>
            <person name="Barbe V."/>
            <person name="Baeriswyl S."/>
            <person name="Bidet P."/>
            <person name="Bingen E."/>
            <person name="Bonacorsi S."/>
            <person name="Bouchier C."/>
            <person name="Bouvet O."/>
            <person name="Calteau A."/>
            <person name="Chiapello H."/>
            <person name="Clermont O."/>
            <person name="Cruveiller S."/>
            <person name="Danchin A."/>
            <person name="Diard M."/>
            <person name="Dossat C."/>
            <person name="Karoui M.E."/>
            <person name="Frapy E."/>
            <person name="Garry L."/>
            <person name="Ghigo J.M."/>
            <person name="Gilles A.M."/>
            <person name="Johnson J."/>
            <person name="Le Bouguenec C."/>
            <person name="Lescat M."/>
            <person name="Mangenot S."/>
            <person name="Martinez-Jehanne V."/>
            <person name="Matic I."/>
            <person name="Nassif X."/>
            <person name="Oztas S."/>
            <person name="Petit M.A."/>
            <person name="Pichon C."/>
            <person name="Rouy Z."/>
            <person name="Ruf C.S."/>
            <person name="Schneider D."/>
            <person name="Tourret J."/>
            <person name="Vacherie B."/>
            <person name="Vallenet D."/>
            <person name="Medigue C."/>
            <person name="Rocha E.P.C."/>
            <person name="Denamur E."/>
        </authorList>
    </citation>
    <scope>NUCLEOTIDE SEQUENCE [LARGE SCALE GENOMIC DNA]</scope>
    <source>
        <strain>ATCC 35469 / DSM 13698 / BCRC 15582 / CCUG 18766 / IAM 14443 / JCM 21226 / LMG 7866 / NBRC 102419 / NCTC 12128 / CDC 0568-73</strain>
    </source>
</reference>
<feature type="chain" id="PRO_1000146240" description="Adenine deaminase">
    <location>
        <begin position="1"/>
        <end position="588"/>
    </location>
</feature>
<organism>
    <name type="scientific">Escherichia fergusonii (strain ATCC 35469 / DSM 13698 / CCUG 18766 / IAM 14443 / JCM 21226 / LMG 7866 / NBRC 102419 / NCTC 12128 / CDC 0568-73)</name>
    <dbReference type="NCBI Taxonomy" id="585054"/>
    <lineage>
        <taxon>Bacteria</taxon>
        <taxon>Pseudomonadati</taxon>
        <taxon>Pseudomonadota</taxon>
        <taxon>Gammaproteobacteria</taxon>
        <taxon>Enterobacterales</taxon>
        <taxon>Enterobacteriaceae</taxon>
        <taxon>Escherichia</taxon>
    </lineage>
</organism>